<accession>O18896</accession>
<organism>
    <name type="scientific">Sus scrofa</name>
    <name type="common">Pig</name>
    <dbReference type="NCBI Taxonomy" id="9823"/>
    <lineage>
        <taxon>Eukaryota</taxon>
        <taxon>Metazoa</taxon>
        <taxon>Chordata</taxon>
        <taxon>Craniata</taxon>
        <taxon>Vertebrata</taxon>
        <taxon>Euteleostomi</taxon>
        <taxon>Mammalia</taxon>
        <taxon>Eutheria</taxon>
        <taxon>Laurasiatheria</taxon>
        <taxon>Artiodactyla</taxon>
        <taxon>Suina</taxon>
        <taxon>Suidae</taxon>
        <taxon>Sus</taxon>
    </lineage>
</organism>
<keyword id="KW-0007">Acetylation</keyword>
<keyword id="KW-0010">Activator</keyword>
<keyword id="KW-0221">Differentiation</keyword>
<keyword id="KW-0238">DNA-binding</keyword>
<keyword id="KW-1017">Isopeptide bond</keyword>
<keyword id="KW-0539">Nucleus</keyword>
<keyword id="KW-0597">Phosphoprotein</keyword>
<keyword id="KW-1185">Reference proteome</keyword>
<keyword id="KW-0804">Transcription</keyword>
<keyword id="KW-0805">Transcription regulation</keyword>
<keyword id="KW-0832">Ubl conjugation</keyword>
<gene>
    <name type="primary">SOX9</name>
</gene>
<name>SOX9_PIG</name>
<dbReference type="EMBL" id="AF029696">
    <property type="protein sequence ID" value="AAB81431.1"/>
    <property type="molecule type" value="mRNA"/>
</dbReference>
<dbReference type="RefSeq" id="NP_999008.1">
    <property type="nucleotide sequence ID" value="NM_213843.1"/>
</dbReference>
<dbReference type="SMR" id="O18896"/>
<dbReference type="FunCoup" id="O18896">
    <property type="interactions" value="113"/>
</dbReference>
<dbReference type="STRING" id="9823.ENSSSCP00000018278"/>
<dbReference type="GlyGen" id="O18896">
    <property type="glycosylation" value="2 sites"/>
</dbReference>
<dbReference type="PaxDb" id="9823-ENSSSCP00000018278"/>
<dbReference type="GeneID" id="396840"/>
<dbReference type="KEGG" id="ssc:396840"/>
<dbReference type="CTD" id="6662"/>
<dbReference type="eggNOG" id="KOG0527">
    <property type="taxonomic scope" value="Eukaryota"/>
</dbReference>
<dbReference type="InParanoid" id="O18896"/>
<dbReference type="OrthoDB" id="6247875at2759"/>
<dbReference type="Proteomes" id="UP000008227">
    <property type="component" value="Unplaced"/>
</dbReference>
<dbReference type="Proteomes" id="UP000314985">
    <property type="component" value="Unplaced"/>
</dbReference>
<dbReference type="Proteomes" id="UP000694570">
    <property type="component" value="Unplaced"/>
</dbReference>
<dbReference type="Proteomes" id="UP000694571">
    <property type="component" value="Unplaced"/>
</dbReference>
<dbReference type="Proteomes" id="UP000694720">
    <property type="component" value="Unplaced"/>
</dbReference>
<dbReference type="Proteomes" id="UP000694722">
    <property type="component" value="Unplaced"/>
</dbReference>
<dbReference type="Proteomes" id="UP000694723">
    <property type="component" value="Unplaced"/>
</dbReference>
<dbReference type="Proteomes" id="UP000694724">
    <property type="component" value="Unplaced"/>
</dbReference>
<dbReference type="Proteomes" id="UP000694725">
    <property type="component" value="Unplaced"/>
</dbReference>
<dbReference type="Proteomes" id="UP000694726">
    <property type="component" value="Unplaced"/>
</dbReference>
<dbReference type="Proteomes" id="UP000694727">
    <property type="component" value="Unplaced"/>
</dbReference>
<dbReference type="Proteomes" id="UP000694728">
    <property type="component" value="Unplaced"/>
</dbReference>
<dbReference type="GO" id="GO:0005634">
    <property type="term" value="C:nucleus"/>
    <property type="evidence" value="ECO:0000314"/>
    <property type="project" value="BHF-UCL"/>
</dbReference>
<dbReference type="GO" id="GO:0032991">
    <property type="term" value="C:protein-containing complex"/>
    <property type="evidence" value="ECO:0000250"/>
    <property type="project" value="UniProtKB"/>
</dbReference>
<dbReference type="GO" id="GO:0003682">
    <property type="term" value="F:chromatin binding"/>
    <property type="evidence" value="ECO:0000250"/>
    <property type="project" value="UniProtKB"/>
</dbReference>
<dbReference type="GO" id="GO:0000987">
    <property type="term" value="F:cis-regulatory region sequence-specific DNA binding"/>
    <property type="evidence" value="ECO:0000250"/>
    <property type="project" value="UniProtKB"/>
</dbReference>
<dbReference type="GO" id="GO:0003677">
    <property type="term" value="F:DNA binding"/>
    <property type="evidence" value="ECO:0000250"/>
    <property type="project" value="UniProtKB"/>
</dbReference>
<dbReference type="GO" id="GO:0001228">
    <property type="term" value="F:DNA-binding transcription activator activity, RNA polymerase II-specific"/>
    <property type="evidence" value="ECO:0000315"/>
    <property type="project" value="UniProtKB"/>
</dbReference>
<dbReference type="GO" id="GO:0003700">
    <property type="term" value="F:DNA-binding transcription factor activity"/>
    <property type="evidence" value="ECO:0000250"/>
    <property type="project" value="UniProtKB"/>
</dbReference>
<dbReference type="GO" id="GO:0000981">
    <property type="term" value="F:DNA-binding transcription factor activity, RNA polymerase II-specific"/>
    <property type="evidence" value="ECO:0000250"/>
    <property type="project" value="UniProtKB"/>
</dbReference>
<dbReference type="GO" id="GO:0000978">
    <property type="term" value="F:RNA polymerase II cis-regulatory region sequence-specific DNA binding"/>
    <property type="evidence" value="ECO:0000250"/>
    <property type="project" value="UniProtKB"/>
</dbReference>
<dbReference type="GO" id="GO:0043565">
    <property type="term" value="F:sequence-specific DNA binding"/>
    <property type="evidence" value="ECO:0000250"/>
    <property type="project" value="UniProtKB"/>
</dbReference>
<dbReference type="GO" id="GO:0001502">
    <property type="term" value="P:cartilage condensation"/>
    <property type="evidence" value="ECO:0000250"/>
    <property type="project" value="UniProtKB"/>
</dbReference>
<dbReference type="GO" id="GO:0051216">
    <property type="term" value="P:cartilage development"/>
    <property type="evidence" value="ECO:0000250"/>
    <property type="project" value="UniProtKB"/>
</dbReference>
<dbReference type="GO" id="GO:0001708">
    <property type="term" value="P:cell fate specification"/>
    <property type="evidence" value="ECO:0000250"/>
    <property type="project" value="UniProtKB"/>
</dbReference>
<dbReference type="GO" id="GO:0071773">
    <property type="term" value="P:cellular response to BMP stimulus"/>
    <property type="evidence" value="ECO:0000250"/>
    <property type="project" value="UniProtKB"/>
</dbReference>
<dbReference type="GO" id="GO:0071364">
    <property type="term" value="P:cellular response to epidermal growth factor stimulus"/>
    <property type="evidence" value="ECO:0000250"/>
    <property type="project" value="UniProtKB"/>
</dbReference>
<dbReference type="GO" id="GO:0071504">
    <property type="term" value="P:cellular response to heparin"/>
    <property type="evidence" value="ECO:0000250"/>
    <property type="project" value="UniProtKB"/>
</dbReference>
<dbReference type="GO" id="GO:0071260">
    <property type="term" value="P:cellular response to mechanical stimulus"/>
    <property type="evidence" value="ECO:0000250"/>
    <property type="project" value="UniProtKB"/>
</dbReference>
<dbReference type="GO" id="GO:0071560">
    <property type="term" value="P:cellular response to transforming growth factor beta stimulus"/>
    <property type="evidence" value="ECO:0000250"/>
    <property type="project" value="UniProtKB"/>
</dbReference>
<dbReference type="GO" id="GO:0002062">
    <property type="term" value="P:chondrocyte differentiation"/>
    <property type="evidence" value="ECO:0000250"/>
    <property type="project" value="UniProtKB"/>
</dbReference>
<dbReference type="GO" id="GO:0003413">
    <property type="term" value="P:chondrocyte differentiation involved in endochondral bone morphogenesis"/>
    <property type="evidence" value="ECO:0000250"/>
    <property type="project" value="UniProtKB"/>
</dbReference>
<dbReference type="GO" id="GO:0003415">
    <property type="term" value="P:chondrocyte hypertrophy"/>
    <property type="evidence" value="ECO:0000250"/>
    <property type="project" value="UniProtKB"/>
</dbReference>
<dbReference type="GO" id="GO:0006338">
    <property type="term" value="P:chromatin remodeling"/>
    <property type="evidence" value="ECO:0000250"/>
    <property type="project" value="UniProtKB"/>
</dbReference>
<dbReference type="GO" id="GO:0090103">
    <property type="term" value="P:cochlea morphogenesis"/>
    <property type="evidence" value="ECO:0000250"/>
    <property type="project" value="UniProtKB"/>
</dbReference>
<dbReference type="GO" id="GO:0003203">
    <property type="term" value="P:endocardial cushion morphogenesis"/>
    <property type="evidence" value="ECO:0000250"/>
    <property type="project" value="UniProtKB"/>
</dbReference>
<dbReference type="GO" id="GO:0007173">
    <property type="term" value="P:epidermal growth factor receptor signaling pathway"/>
    <property type="evidence" value="ECO:0000250"/>
    <property type="project" value="UniProtKB"/>
</dbReference>
<dbReference type="GO" id="GO:0060517">
    <property type="term" value="P:epithelial cell proliferation involved in prostatic bud elongation"/>
    <property type="evidence" value="ECO:0000250"/>
    <property type="project" value="UniProtKB"/>
</dbReference>
<dbReference type="GO" id="GO:0001837">
    <property type="term" value="P:epithelial to mesenchymal transition"/>
    <property type="evidence" value="ECO:0000250"/>
    <property type="project" value="UniProtKB"/>
</dbReference>
<dbReference type="GO" id="GO:0070371">
    <property type="term" value="P:ERK1 and ERK2 cascade"/>
    <property type="evidence" value="ECO:0000250"/>
    <property type="project" value="UniProtKB"/>
</dbReference>
<dbReference type="GO" id="GO:0003430">
    <property type="term" value="P:growth plate cartilage chondrocyte growth"/>
    <property type="evidence" value="ECO:0000250"/>
    <property type="project" value="UniProtKB"/>
</dbReference>
<dbReference type="GO" id="GO:0001942">
    <property type="term" value="P:hair follicle development"/>
    <property type="evidence" value="ECO:0000250"/>
    <property type="project" value="UniProtKB"/>
</dbReference>
<dbReference type="GO" id="GO:0007507">
    <property type="term" value="P:heart development"/>
    <property type="evidence" value="ECO:0000318"/>
    <property type="project" value="GO_Central"/>
</dbReference>
<dbReference type="GO" id="GO:0003170">
    <property type="term" value="P:heart valve development"/>
    <property type="evidence" value="ECO:0000250"/>
    <property type="project" value="UniProtKB"/>
</dbReference>
<dbReference type="GO" id="GO:0003179">
    <property type="term" value="P:heart valve morphogenesis"/>
    <property type="evidence" value="ECO:0000250"/>
    <property type="project" value="UniProtKB"/>
</dbReference>
<dbReference type="GO" id="GO:0060729">
    <property type="term" value="P:intestinal epithelial structure maintenance"/>
    <property type="evidence" value="ECO:0000250"/>
    <property type="project" value="UniProtKB"/>
</dbReference>
<dbReference type="GO" id="GO:0019100">
    <property type="term" value="P:male germ-line sex determination"/>
    <property type="evidence" value="ECO:0000250"/>
    <property type="project" value="UniProtKB"/>
</dbReference>
<dbReference type="GO" id="GO:0008584">
    <property type="term" value="P:male gonad development"/>
    <property type="evidence" value="ECO:0000250"/>
    <property type="project" value="UniProtKB"/>
</dbReference>
<dbReference type="GO" id="GO:0072289">
    <property type="term" value="P:metanephric nephron tubule formation"/>
    <property type="evidence" value="ECO:0000250"/>
    <property type="project" value="UniProtKB"/>
</dbReference>
<dbReference type="GO" id="GO:0061138">
    <property type="term" value="P:morphogenesis of a branching epithelium"/>
    <property type="evidence" value="ECO:0000250"/>
    <property type="project" value="UniProtKB"/>
</dbReference>
<dbReference type="GO" id="GO:0002009">
    <property type="term" value="P:morphogenesis of an epithelium"/>
    <property type="evidence" value="ECO:0000318"/>
    <property type="project" value="GO_Central"/>
</dbReference>
<dbReference type="GO" id="GO:0043066">
    <property type="term" value="P:negative regulation of apoptotic process"/>
    <property type="evidence" value="ECO:0000250"/>
    <property type="project" value="UniProtKB"/>
</dbReference>
<dbReference type="GO" id="GO:0070168">
    <property type="term" value="P:negative regulation of biomineral tissue development"/>
    <property type="evidence" value="ECO:0000250"/>
    <property type="project" value="UniProtKB"/>
</dbReference>
<dbReference type="GO" id="GO:0090090">
    <property type="term" value="P:negative regulation of canonical Wnt signaling pathway"/>
    <property type="evidence" value="ECO:0000250"/>
    <property type="project" value="UniProtKB"/>
</dbReference>
<dbReference type="GO" id="GO:0032331">
    <property type="term" value="P:negative regulation of chondrocyte differentiation"/>
    <property type="evidence" value="ECO:0000250"/>
    <property type="project" value="UniProtKB"/>
</dbReference>
<dbReference type="GO" id="GO:0045892">
    <property type="term" value="P:negative regulation of DNA-templated transcription"/>
    <property type="evidence" value="ECO:0000250"/>
    <property type="project" value="UniProtKB"/>
</dbReference>
<dbReference type="GO" id="GO:0050680">
    <property type="term" value="P:negative regulation of epithelial cell proliferation"/>
    <property type="evidence" value="ECO:0000250"/>
    <property type="project" value="UniProtKB"/>
</dbReference>
<dbReference type="GO" id="GO:0046322">
    <property type="term" value="P:negative regulation of fatty acid oxidation"/>
    <property type="evidence" value="ECO:0000250"/>
    <property type="project" value="UniProtKB"/>
</dbReference>
<dbReference type="GO" id="GO:0002683">
    <property type="term" value="P:negative regulation of immune system process"/>
    <property type="evidence" value="ECO:0000250"/>
    <property type="project" value="UniProtKB"/>
</dbReference>
<dbReference type="GO" id="GO:0045662">
    <property type="term" value="P:negative regulation of myoblast differentiation"/>
    <property type="evidence" value="ECO:0000250"/>
    <property type="project" value="UniProtKB"/>
</dbReference>
<dbReference type="GO" id="GO:0030279">
    <property type="term" value="P:negative regulation of ossification"/>
    <property type="evidence" value="ECO:0000250"/>
    <property type="project" value="UniProtKB"/>
</dbReference>
<dbReference type="GO" id="GO:0045668">
    <property type="term" value="P:negative regulation of osteoblast differentiation"/>
    <property type="evidence" value="ECO:0000250"/>
    <property type="project" value="UniProtKB"/>
</dbReference>
<dbReference type="GO" id="GO:0046533">
    <property type="term" value="P:negative regulation of photoreceptor cell differentiation"/>
    <property type="evidence" value="ECO:0000250"/>
    <property type="project" value="UniProtKB"/>
</dbReference>
<dbReference type="GO" id="GO:0000122">
    <property type="term" value="P:negative regulation of transcription by RNA polymerase II"/>
    <property type="evidence" value="ECO:0000318"/>
    <property type="project" value="GO_Central"/>
</dbReference>
<dbReference type="GO" id="GO:0014036">
    <property type="term" value="P:neural crest cell fate specification"/>
    <property type="evidence" value="ECO:0000250"/>
    <property type="project" value="UniProtKB"/>
</dbReference>
<dbReference type="GO" id="GO:0006334">
    <property type="term" value="P:nucleosome assembly"/>
    <property type="evidence" value="ECO:0000250"/>
    <property type="project" value="UniProtKB"/>
</dbReference>
<dbReference type="GO" id="GO:0048709">
    <property type="term" value="P:oligodendrocyte differentiation"/>
    <property type="evidence" value="ECO:0000318"/>
    <property type="project" value="GO_Central"/>
</dbReference>
<dbReference type="GO" id="GO:0030916">
    <property type="term" value="P:otic vesicle formation"/>
    <property type="evidence" value="ECO:0000250"/>
    <property type="project" value="UniProtKB"/>
</dbReference>
<dbReference type="GO" id="GO:0090190">
    <property type="term" value="P:positive regulation of branching involved in ureteric bud morphogenesis"/>
    <property type="evidence" value="ECO:0000250"/>
    <property type="project" value="UniProtKB"/>
</dbReference>
<dbReference type="GO" id="GO:0061036">
    <property type="term" value="P:positive regulation of cartilage development"/>
    <property type="evidence" value="ECO:0000250"/>
    <property type="project" value="UniProtKB"/>
</dbReference>
<dbReference type="GO" id="GO:0008284">
    <property type="term" value="P:positive regulation of cell population proliferation"/>
    <property type="evidence" value="ECO:0000250"/>
    <property type="project" value="UniProtKB"/>
</dbReference>
<dbReference type="GO" id="GO:0032332">
    <property type="term" value="P:positive regulation of chondrocyte differentiation"/>
    <property type="evidence" value="ECO:0000250"/>
    <property type="project" value="UniProtKB"/>
</dbReference>
<dbReference type="GO" id="GO:0030858">
    <property type="term" value="P:positive regulation of epithelial cell differentiation"/>
    <property type="evidence" value="ECO:0000250"/>
    <property type="project" value="UniProtKB"/>
</dbReference>
<dbReference type="GO" id="GO:0010634">
    <property type="term" value="P:positive regulation of epithelial cell migration"/>
    <property type="evidence" value="ECO:0000250"/>
    <property type="project" value="UniProtKB"/>
</dbReference>
<dbReference type="GO" id="GO:0050679">
    <property type="term" value="P:positive regulation of epithelial cell proliferation"/>
    <property type="evidence" value="ECO:0000250"/>
    <property type="project" value="UniProtKB"/>
</dbReference>
<dbReference type="GO" id="GO:0010628">
    <property type="term" value="P:positive regulation of gene expression"/>
    <property type="evidence" value="ECO:0000250"/>
    <property type="project" value="UniProtKB"/>
</dbReference>
<dbReference type="GO" id="GO:0090184">
    <property type="term" value="P:positive regulation of kidney development"/>
    <property type="evidence" value="ECO:0000250"/>
    <property type="project" value="UniProtKB"/>
</dbReference>
<dbReference type="GO" id="GO:2000020">
    <property type="term" value="P:positive regulation of male gonad development"/>
    <property type="evidence" value="ECO:0000250"/>
    <property type="project" value="UniProtKB"/>
</dbReference>
<dbReference type="GO" id="GO:0002053">
    <property type="term" value="P:positive regulation of mesenchymal cell proliferation"/>
    <property type="evidence" value="ECO:0000250"/>
    <property type="project" value="UniProtKB"/>
</dbReference>
<dbReference type="GO" id="GO:2000741">
    <property type="term" value="P:positive regulation of mesenchymal stem cell differentiation"/>
    <property type="evidence" value="ECO:0000250"/>
    <property type="project" value="UniProtKB"/>
</dbReference>
<dbReference type="GO" id="GO:0045944">
    <property type="term" value="P:positive regulation of transcription by RNA polymerase II"/>
    <property type="evidence" value="ECO:0000315"/>
    <property type="project" value="UniProtKB"/>
</dbReference>
<dbReference type="GO" id="GO:0065003">
    <property type="term" value="P:protein-containing complex assembly"/>
    <property type="evidence" value="ECO:0000250"/>
    <property type="project" value="UniProtKB"/>
</dbReference>
<dbReference type="GO" id="GO:0042981">
    <property type="term" value="P:regulation of apoptotic process"/>
    <property type="evidence" value="ECO:0000250"/>
    <property type="project" value="UniProtKB"/>
</dbReference>
<dbReference type="GO" id="GO:0061035">
    <property type="term" value="P:regulation of cartilage development"/>
    <property type="evidence" value="ECO:0000250"/>
    <property type="project" value="UniProtKB"/>
</dbReference>
<dbReference type="GO" id="GO:0010564">
    <property type="term" value="P:regulation of cell cycle process"/>
    <property type="evidence" value="ECO:0000250"/>
    <property type="project" value="UniProtKB"/>
</dbReference>
<dbReference type="GO" id="GO:0042127">
    <property type="term" value="P:regulation of cell population proliferation"/>
    <property type="evidence" value="ECO:0000250"/>
    <property type="project" value="UniProtKB"/>
</dbReference>
<dbReference type="GO" id="GO:0060784">
    <property type="term" value="P:regulation of cell proliferation involved in tissue homeostasis"/>
    <property type="evidence" value="ECO:0000250"/>
    <property type="project" value="UniProtKB"/>
</dbReference>
<dbReference type="GO" id="GO:0072034">
    <property type="term" value="P:renal vesicle induction"/>
    <property type="evidence" value="ECO:0000250"/>
    <property type="project" value="UniProtKB"/>
</dbReference>
<dbReference type="GO" id="GO:0070542">
    <property type="term" value="P:response to fatty acid"/>
    <property type="evidence" value="ECO:0000250"/>
    <property type="project" value="UniProtKB"/>
</dbReference>
<dbReference type="GO" id="GO:0060041">
    <property type="term" value="P:retina development in camera-type eye"/>
    <property type="evidence" value="ECO:0000250"/>
    <property type="project" value="UniProtKB"/>
</dbReference>
<dbReference type="GO" id="GO:0060221">
    <property type="term" value="P:retinal rod cell differentiation"/>
    <property type="evidence" value="ECO:0000250"/>
    <property type="project" value="UniProtKB"/>
</dbReference>
<dbReference type="GO" id="GO:0060008">
    <property type="term" value="P:Sertoli cell differentiation"/>
    <property type="evidence" value="ECO:0000250"/>
    <property type="project" value="UniProtKB"/>
</dbReference>
<dbReference type="GO" id="GO:0007165">
    <property type="term" value="P:signal transduction"/>
    <property type="evidence" value="ECO:0000250"/>
    <property type="project" value="UniProtKB"/>
</dbReference>
<dbReference type="GO" id="GO:0001501">
    <property type="term" value="P:skeletal system development"/>
    <property type="evidence" value="ECO:0000250"/>
    <property type="project" value="UniProtKB"/>
</dbReference>
<dbReference type="GO" id="GO:0035019">
    <property type="term" value="P:somatic stem cell population maintenance"/>
    <property type="evidence" value="ECO:0000250"/>
    <property type="project" value="UniProtKB"/>
</dbReference>
<dbReference type="GO" id="GO:0007283">
    <property type="term" value="P:spermatogenesis"/>
    <property type="evidence" value="ECO:0000250"/>
    <property type="project" value="UniProtKB"/>
</dbReference>
<dbReference type="GO" id="GO:0001894">
    <property type="term" value="P:tissue homeostasis"/>
    <property type="evidence" value="ECO:0000250"/>
    <property type="project" value="UniProtKB"/>
</dbReference>
<dbReference type="CDD" id="cd22031">
    <property type="entry name" value="HMG-box_SoxE"/>
    <property type="match status" value="1"/>
</dbReference>
<dbReference type="FunFam" id="1.10.30.10:FF:000004">
    <property type="entry name" value="Transcription factor SOX-10"/>
    <property type="match status" value="1"/>
</dbReference>
<dbReference type="Gene3D" id="1.10.30.10">
    <property type="entry name" value="High mobility group box domain"/>
    <property type="match status" value="1"/>
</dbReference>
<dbReference type="InterPro" id="IPR009071">
    <property type="entry name" value="HMG_box_dom"/>
</dbReference>
<dbReference type="InterPro" id="IPR036910">
    <property type="entry name" value="HMG_box_dom_sf"/>
</dbReference>
<dbReference type="InterPro" id="IPR022151">
    <property type="entry name" value="Sox_N"/>
</dbReference>
<dbReference type="InterPro" id="IPR050917">
    <property type="entry name" value="SOX_TF"/>
</dbReference>
<dbReference type="PANTHER" id="PTHR45803">
    <property type="entry name" value="SOX100B"/>
    <property type="match status" value="1"/>
</dbReference>
<dbReference type="PANTHER" id="PTHR45803:SF1">
    <property type="entry name" value="TRANSCRIPTION FACTOR SOX-9"/>
    <property type="match status" value="1"/>
</dbReference>
<dbReference type="Pfam" id="PF00505">
    <property type="entry name" value="HMG_box"/>
    <property type="match status" value="1"/>
</dbReference>
<dbReference type="Pfam" id="PF12444">
    <property type="entry name" value="Sox_N"/>
    <property type="match status" value="1"/>
</dbReference>
<dbReference type="SMART" id="SM00398">
    <property type="entry name" value="HMG"/>
    <property type="match status" value="1"/>
</dbReference>
<dbReference type="SUPFAM" id="SSF47095">
    <property type="entry name" value="HMG-box"/>
    <property type="match status" value="1"/>
</dbReference>
<dbReference type="PROSITE" id="PS50118">
    <property type="entry name" value="HMG_BOX_2"/>
    <property type="match status" value="1"/>
</dbReference>
<proteinExistence type="evidence at transcript level"/>
<sequence>MNLLDPFMKMTDEQEKGLSGAPSPTMSEGSRGSPCPSGSGSDTENTRPQENTFPKGEPDLKKESEEDKFPVCIREAVSQVLKGYDWTLVPMPVRVNGSSKNKPHVKRPMNAFMVWAQAARRKLADQYPHLHNAELSKTLGKLWRLLNESEKRPFVEEAERLRVQHKKDHPDYKYQPRRRKSVKNGQAEAEEATEQTHISPNAIFKALQADSPHSSSGMSEVHSPGEHSGQSQGPPTPPTTPKTDVQPGKADLKREGRPLPEGGRQPPIDFRDVDIGELSSDVISNIETFDVNEFDQYLPPNGHPGVPATHGQVTYTGSYGISSTAATPAGAGHVWMSKQQAPPPPPHPPQQPPPVPQAPAQPQAALPQQPQAPPQQPQAHTLTTLSSEPGQSQRTHIKTEQLSPSHYSEQQQHSPQQIAYSPFNLPHYSPSYPPITRSQYDYTDHQNSGSYYSHARSQGSVLYSTFTYMNPAHGPMYTPIADTSGVPSIPQTHSPQHWEQPVYTQLTRP</sequence>
<evidence type="ECO:0000250" key="1">
    <source>
        <dbReference type="UniProtKB" id="P48436"/>
    </source>
</evidence>
<evidence type="ECO:0000250" key="2">
    <source>
        <dbReference type="UniProtKB" id="Q04887"/>
    </source>
</evidence>
<evidence type="ECO:0000255" key="3">
    <source>
        <dbReference type="PROSITE-ProRule" id="PRU00267"/>
    </source>
</evidence>
<evidence type="ECO:0000256" key="4">
    <source>
        <dbReference type="SAM" id="MobiDB-lite"/>
    </source>
</evidence>
<evidence type="ECO:0000305" key="5"/>
<comment type="function">
    <text evidence="2">Transcription factor that plays a key role in chondrocytes differentiation and skeletal development. Specifically binds the 5'-ACAAAG-3' DNA motif present in enhancers and super-enhancers and promotes expression of genes important for chondrogenesis, including cartilage matrix protein-coding genes COL2A1, COL4A2, COL9A1, COL11A2 and ACAN, SOX5 and SOX6. Also binds to some promoter regions. Plays a central role in successive steps of chondrocyte differentiation. Absolutely required for precartilaginous condensation, the first step in chondrogenesis during which skeletal progenitors differentiate into prechondrocytes. Together with SOX5 and SOX6, required for overt chondrogenesis when condensed prechondrocytes differentiate into early stage chondrocytes, the second step in chondrogenesis. Later, required to direct hypertrophic maturation and block osteoblast differentiation of growth plate chondrocytes: maintains chondrocyte columnar proliferation, delays prehypertrophy and then prevents osteoblastic differentiation of chondrocytes by lowering beta-catenin (CTNNB1) signaling and RUNX2 expression. Also required for chondrocyte hypertrophy, both indirectly, by keeping the lineage fate of chondrocytes, and directly, by remaining present in upper hypertrophic cells and transactivating COL10A1 along with MEF2C. Low lipid levels are the main nutritional determinant for chondrogenic commitment of skeletal progenitor cells: when lipids levels are low, FOXO (FOXO1 and FOXO3) transcription factors promote expression of SOX9, which induces chondrogenic commitment and suppresses fatty acid oxidation. Mechanistically, helps, but is not required, to remove epigenetic signatures of transcriptional repression and deposit active promoter and enhancer marks at chondrocyte-specific genes. Acts in cooperation with the Hedgehog pathway-dependent GLI (GLI1 and GLI3) transcription factors. In addition to cartilage development, also acts as a regulator of proliferation and differentiation in epithelial stem/progenitor cells: involved in the lung epithelium during branching morphogenesis, by balancing proliferation and differentiation and regulating the extracellular matrix. Controls epithelial branching during kidney development.</text>
</comment>
<comment type="subunit">
    <text evidence="1 2">Homodimer; homodimerization is required for activity. Interacts (via C-terminus) with ZNF219; forming a complex that binds to the COL2A1 promoter and activates COL2A1 expression (By similarity). Interacts with DDRGK1. Interacts with EP300/p300 (By similarity). Interacts with beta-catenin (CTNNB1); inhibiting CTNNB1 activity by competing with the binding sites of TCF/LEF within CTNNB1 (By similarity).</text>
</comment>
<comment type="subcellular location">
    <subcellularLocation>
        <location evidence="2 3">Nucleus</location>
    </subcellularLocation>
</comment>
<comment type="domain">
    <text evidence="1">The transactivation domains TAM and TAC (for transactivation domain in the middle and at the C-terminus, respectively) are required to contact transcriptional coactivators and basal transcriptional machinery components and thereby induce gene transactivation.</text>
</comment>
<comment type="domain">
    <text evidence="1">The 9aaTAD motif is a transactivation domain present in a large number of yeast and animal transcription factors.</text>
</comment>
<comment type="domain">
    <text evidence="1">The PQA region (for proline, glutamine and alanine-rich) helps stabilize SOX9 and facilitates transactivation. It lacks intrinsic transactivation capability.</text>
</comment>
<comment type="PTM">
    <text evidence="2">Acetylated; acetylation impairs nuclear localization and ability to transactivate expression of target genes. Deacetylated by SIRT1.</text>
</comment>
<comment type="PTM">
    <text evidence="2">Phosphorylation at Ser-64 and Ser-211 by PKA increases transcriptional activity and may help delay chondrocyte maturation downstream of PTHLH/PTHrP signaling. Phosphorylation at either Ser-64 or Ser-211 is required for sumoylation, but phosphorylation is not dependent on sumoylation. Phosphorylated on tyrosine residues; tyrosine dephosphorylation by PTPN11/SHP2 blocks SOX9 phosphorylation by PKA and subsequent SUMOylation.</text>
</comment>
<comment type="PTM">
    <text evidence="2">Sumoylated; phosphorylation at either Ser-64 or Ser-211 is required for sumoylation. Sumoylation is induced by BMP signaling pathway.</text>
</comment>
<comment type="PTM">
    <text evidence="2">Ubiquitinated; ubiquitination leads to proteasomal degradation and is negatively regulated by DDRGK1.</text>
</comment>
<feature type="chain" id="PRO_0000048744" description="Transcription factor SOX-9">
    <location>
        <begin position="1"/>
        <end position="509"/>
    </location>
</feature>
<feature type="DNA-binding region" description="HMG box" evidence="3">
    <location>
        <begin position="105"/>
        <end position="173"/>
    </location>
</feature>
<feature type="region of interest" description="Disordered" evidence="4">
    <location>
        <begin position="1"/>
        <end position="66"/>
    </location>
</feature>
<feature type="region of interest" description="Dimerization (DIM)" evidence="1">
    <location>
        <begin position="63"/>
        <end position="103"/>
    </location>
</feature>
<feature type="region of interest" description="PQA" evidence="1">
    <location>
        <begin position="63"/>
        <end position="103"/>
    </location>
</feature>
<feature type="region of interest" description="Disordered" evidence="4">
    <location>
        <begin position="160"/>
        <end position="271"/>
    </location>
</feature>
<feature type="region of interest" description="Transactivation domain (TAM)" evidence="1">
    <location>
        <begin position="224"/>
        <end position="307"/>
    </location>
</feature>
<feature type="region of interest" description="Disordered" evidence="4">
    <location>
        <begin position="335"/>
        <end position="415"/>
    </location>
</feature>
<feature type="region of interest" description="Transactivation domain (TAC)" evidence="1">
    <location>
        <begin position="394"/>
        <end position="509"/>
    </location>
</feature>
<feature type="region of interest" description="Disordered" evidence="4">
    <location>
        <begin position="420"/>
        <end position="439"/>
    </location>
</feature>
<feature type="region of interest" description="Disordered" evidence="4">
    <location>
        <begin position="479"/>
        <end position="509"/>
    </location>
</feature>
<feature type="short sequence motif" description="9aaTAD 1" evidence="1">
    <location>
        <begin position="275"/>
        <end position="284"/>
    </location>
</feature>
<feature type="short sequence motif" description="9aaTAD 2" evidence="1">
    <location>
        <begin position="290"/>
        <end position="298"/>
    </location>
</feature>
<feature type="short sequence motif" description="9aaTAD 3" evidence="1">
    <location>
        <begin position="460"/>
        <end position="468"/>
    </location>
</feature>
<feature type="compositionally biased region" description="Low complexity" evidence="4">
    <location>
        <begin position="27"/>
        <end position="41"/>
    </location>
</feature>
<feature type="compositionally biased region" description="Polar residues" evidence="4">
    <location>
        <begin position="42"/>
        <end position="52"/>
    </location>
</feature>
<feature type="compositionally biased region" description="Basic and acidic residues" evidence="4">
    <location>
        <begin position="56"/>
        <end position="66"/>
    </location>
</feature>
<feature type="compositionally biased region" description="Basic and acidic residues" evidence="4">
    <location>
        <begin position="160"/>
        <end position="174"/>
    </location>
</feature>
<feature type="compositionally biased region" description="Pro residues" evidence="4">
    <location>
        <begin position="341"/>
        <end position="359"/>
    </location>
</feature>
<feature type="compositionally biased region" description="Low complexity" evidence="4">
    <location>
        <begin position="360"/>
        <end position="369"/>
    </location>
</feature>
<feature type="compositionally biased region" description="Polar residues" evidence="4">
    <location>
        <begin position="380"/>
        <end position="415"/>
    </location>
</feature>
<feature type="compositionally biased region" description="Polar residues" evidence="4">
    <location>
        <begin position="485"/>
        <end position="509"/>
    </location>
</feature>
<feature type="modified residue" description="Phosphoserine" evidence="2">
    <location>
        <position position="64"/>
    </location>
</feature>
<feature type="modified residue" description="Phosphoserine" evidence="2">
    <location>
        <position position="211"/>
    </location>
</feature>
<feature type="cross-link" description="Glycyl lysine isopeptide (Lys-Gly) (interchain with G-Cter in ubiquitin)" evidence="2">
    <location>
        <position position="398"/>
    </location>
</feature>
<reference key="1">
    <citation type="submission" date="1997-10" db="EMBL/GenBank/DDBJ databases">
        <authorList>
            <person name="Pilon N."/>
            <person name="Silversides D.W."/>
        </authorList>
    </citation>
    <scope>NUCLEOTIDE SEQUENCE [MRNA]</scope>
</reference>
<protein>
    <recommendedName>
        <fullName evidence="5">Transcription factor SOX-9</fullName>
    </recommendedName>
</protein>